<proteinExistence type="inferred from homology"/>
<keyword id="KW-0004">4Fe-4S</keyword>
<keyword id="KW-0119">Carbohydrate metabolism</keyword>
<keyword id="KW-0963">Cytoplasm</keyword>
<keyword id="KW-0313">Glucose metabolism</keyword>
<keyword id="KW-0408">Iron</keyword>
<keyword id="KW-0411">Iron-sulfur</keyword>
<keyword id="KW-0479">Metal-binding</keyword>
<keyword id="KW-0560">Oxidoreductase</keyword>
<keyword id="KW-0949">S-adenosyl-L-methionine</keyword>
<reference key="1">
    <citation type="journal article" date="2007" name="PLoS ONE">
        <title>Molecular correlates of host specialization in Staphylococcus aureus.</title>
        <authorList>
            <person name="Herron-Olson L."/>
            <person name="Fitzgerald J.R."/>
            <person name="Musser J.M."/>
            <person name="Kapur V."/>
        </authorList>
    </citation>
    <scope>NUCLEOTIDE SEQUENCE [LARGE SCALE GENOMIC DNA]</scope>
    <source>
        <strain>bovine RF122 / ET3-1</strain>
    </source>
</reference>
<gene>
    <name type="primary">pflA</name>
    <name type="ordered locus">SAB0165</name>
</gene>
<sequence>MLKGHLHSVESLGTVDGPGLRYILFTQGCLLRCLYCHNPDTWKISEPSREVTVDEMVNEILPYKPYFDASGGGVTVSGGEPLLQMPFLEKLFAELKENGVHTCLDTSAGCANDTKAFQRHFEELQKHTDLILLDIKHIDNDKHIRLTGKPNTHILNFARKLSDMKQPVWIRHVLVPGYSDDKDDLIKLGEFINSLDNVEKFEILPYHQLGVHKWKTLGIAYELEDVEAPDDEAVKAAYRYVNFKGKIPVEL</sequence>
<organism>
    <name type="scientific">Staphylococcus aureus (strain bovine RF122 / ET3-1)</name>
    <dbReference type="NCBI Taxonomy" id="273036"/>
    <lineage>
        <taxon>Bacteria</taxon>
        <taxon>Bacillati</taxon>
        <taxon>Bacillota</taxon>
        <taxon>Bacilli</taxon>
        <taxon>Bacillales</taxon>
        <taxon>Staphylococcaceae</taxon>
        <taxon>Staphylococcus</taxon>
    </lineage>
</organism>
<feature type="chain" id="PRO_0000271710" description="Pyruvate formate-lyase-activating enzyme">
    <location>
        <begin position="1"/>
        <end position="251"/>
    </location>
</feature>
<feature type="domain" description="Radical SAM core" evidence="3">
    <location>
        <begin position="15"/>
        <end position="244"/>
    </location>
</feature>
<feature type="binding site" evidence="2">
    <location>
        <position position="29"/>
    </location>
    <ligand>
        <name>[4Fe-4S] cluster</name>
        <dbReference type="ChEBI" id="CHEBI:49883"/>
        <note>4Fe-4S-S-AdoMet</note>
    </ligand>
</feature>
<feature type="binding site" evidence="2">
    <location>
        <position position="33"/>
    </location>
    <ligand>
        <name>[4Fe-4S] cluster</name>
        <dbReference type="ChEBI" id="CHEBI:49883"/>
        <note>4Fe-4S-S-AdoMet</note>
    </ligand>
</feature>
<feature type="binding site" evidence="2">
    <location>
        <begin position="35"/>
        <end position="37"/>
    </location>
    <ligand>
        <name>S-adenosyl-L-methionine</name>
        <dbReference type="ChEBI" id="CHEBI:59789"/>
    </ligand>
</feature>
<feature type="binding site" evidence="2">
    <location>
        <position position="36"/>
    </location>
    <ligand>
        <name>[4Fe-4S] cluster</name>
        <dbReference type="ChEBI" id="CHEBI:49883"/>
        <note>4Fe-4S-S-AdoMet</note>
    </ligand>
</feature>
<feature type="binding site" evidence="2">
    <location>
        <position position="79"/>
    </location>
    <ligand>
        <name>S-adenosyl-L-methionine</name>
        <dbReference type="ChEBI" id="CHEBI:59789"/>
    </ligand>
</feature>
<feature type="binding site" evidence="2">
    <location>
        <begin position="134"/>
        <end position="136"/>
    </location>
    <ligand>
        <name>S-adenosyl-L-methionine</name>
        <dbReference type="ChEBI" id="CHEBI:59789"/>
    </ligand>
</feature>
<feature type="binding site" evidence="2">
    <location>
        <position position="207"/>
    </location>
    <ligand>
        <name>S-adenosyl-L-methionine</name>
        <dbReference type="ChEBI" id="CHEBI:59789"/>
    </ligand>
</feature>
<comment type="function">
    <text evidence="1">Activation of pyruvate formate-lyase under anaerobic conditions by generation of an organic free radical, using S-adenosylmethionine and reduced flavodoxin as cosubstrates to produce 5'-deoxy-adenosine.</text>
</comment>
<comment type="catalytic activity">
    <reaction>
        <text>glycyl-[formate C-acetyltransferase] + reduced [flavodoxin] + S-adenosyl-L-methionine = glycin-2-yl radical-[formate C-acetyltransferase] + semiquinone [flavodoxin] + 5'-deoxyadenosine + L-methionine + H(+)</text>
        <dbReference type="Rhea" id="RHEA:19225"/>
        <dbReference type="Rhea" id="RHEA-COMP:10622"/>
        <dbReference type="Rhea" id="RHEA-COMP:12190"/>
        <dbReference type="Rhea" id="RHEA-COMP:12191"/>
        <dbReference type="Rhea" id="RHEA-COMP:14480"/>
        <dbReference type="ChEBI" id="CHEBI:15378"/>
        <dbReference type="ChEBI" id="CHEBI:17319"/>
        <dbReference type="ChEBI" id="CHEBI:29947"/>
        <dbReference type="ChEBI" id="CHEBI:32722"/>
        <dbReference type="ChEBI" id="CHEBI:57618"/>
        <dbReference type="ChEBI" id="CHEBI:57844"/>
        <dbReference type="ChEBI" id="CHEBI:59789"/>
        <dbReference type="ChEBI" id="CHEBI:140311"/>
        <dbReference type="EC" id="1.97.1.4"/>
    </reaction>
</comment>
<comment type="cofactor">
    <cofactor evidence="1">
        <name>[4Fe-4S] cluster</name>
        <dbReference type="ChEBI" id="CHEBI:49883"/>
    </cofactor>
    <text evidence="1">Binds 1 [4Fe-4S] cluster. The cluster is coordinated with 3 cysteines and an exchangeable S-adenosyl-L-methionine.</text>
</comment>
<comment type="subcellular location">
    <subcellularLocation>
        <location evidence="1">Cytoplasm</location>
    </subcellularLocation>
</comment>
<comment type="similarity">
    <text evidence="4">Belongs to the organic radical-activating enzymes family.</text>
</comment>
<name>PFLA_STAAB</name>
<accession>Q2YV52</accession>
<dbReference type="EC" id="1.97.1.4"/>
<dbReference type="EMBL" id="AJ938182">
    <property type="protein sequence ID" value="CAI79853.1"/>
    <property type="molecule type" value="Genomic_DNA"/>
</dbReference>
<dbReference type="RefSeq" id="WP_000911657.1">
    <property type="nucleotide sequence ID" value="NC_007622.1"/>
</dbReference>
<dbReference type="SMR" id="Q2YV52"/>
<dbReference type="KEGG" id="sab:SAB0165"/>
<dbReference type="HOGENOM" id="CLU_058969_1_1_9"/>
<dbReference type="GO" id="GO:0005737">
    <property type="term" value="C:cytoplasm"/>
    <property type="evidence" value="ECO:0007669"/>
    <property type="project" value="UniProtKB-SubCell"/>
</dbReference>
<dbReference type="GO" id="GO:0051539">
    <property type="term" value="F:4 iron, 4 sulfur cluster binding"/>
    <property type="evidence" value="ECO:0007669"/>
    <property type="project" value="UniProtKB-KW"/>
</dbReference>
<dbReference type="GO" id="GO:0043365">
    <property type="term" value="F:[formate-C-acetyltransferase]-activating enzyme activity"/>
    <property type="evidence" value="ECO:0007669"/>
    <property type="project" value="UniProtKB-EC"/>
</dbReference>
<dbReference type="GO" id="GO:0046872">
    <property type="term" value="F:metal ion binding"/>
    <property type="evidence" value="ECO:0007669"/>
    <property type="project" value="UniProtKB-KW"/>
</dbReference>
<dbReference type="GO" id="GO:0006006">
    <property type="term" value="P:glucose metabolic process"/>
    <property type="evidence" value="ECO:0007669"/>
    <property type="project" value="UniProtKB-KW"/>
</dbReference>
<dbReference type="CDD" id="cd01335">
    <property type="entry name" value="Radical_SAM"/>
    <property type="match status" value="1"/>
</dbReference>
<dbReference type="Gene3D" id="3.20.20.70">
    <property type="entry name" value="Aldolase class I"/>
    <property type="match status" value="1"/>
</dbReference>
<dbReference type="InterPro" id="IPR013785">
    <property type="entry name" value="Aldolase_TIM"/>
</dbReference>
<dbReference type="InterPro" id="IPR040074">
    <property type="entry name" value="BssD/PflA/YjjW"/>
</dbReference>
<dbReference type="InterPro" id="IPR034457">
    <property type="entry name" value="Organic_radical-activating"/>
</dbReference>
<dbReference type="InterPro" id="IPR012839">
    <property type="entry name" value="Organic_radical_activase"/>
</dbReference>
<dbReference type="InterPro" id="IPR012838">
    <property type="entry name" value="PFL1_activating"/>
</dbReference>
<dbReference type="InterPro" id="IPR034465">
    <property type="entry name" value="Pyruvate_for-lyase_activase"/>
</dbReference>
<dbReference type="InterPro" id="IPR001989">
    <property type="entry name" value="Radical_activat_CS"/>
</dbReference>
<dbReference type="InterPro" id="IPR007197">
    <property type="entry name" value="rSAM"/>
</dbReference>
<dbReference type="NCBIfam" id="TIGR02493">
    <property type="entry name" value="PFLA"/>
    <property type="match status" value="1"/>
</dbReference>
<dbReference type="PANTHER" id="PTHR30352:SF5">
    <property type="entry name" value="PYRUVATE FORMATE-LYASE 1-ACTIVATING ENZYME"/>
    <property type="match status" value="1"/>
</dbReference>
<dbReference type="PANTHER" id="PTHR30352">
    <property type="entry name" value="PYRUVATE FORMATE-LYASE-ACTIVATING ENZYME"/>
    <property type="match status" value="1"/>
</dbReference>
<dbReference type="Pfam" id="PF13353">
    <property type="entry name" value="Fer4_12"/>
    <property type="match status" value="1"/>
</dbReference>
<dbReference type="Pfam" id="PF04055">
    <property type="entry name" value="Radical_SAM"/>
    <property type="match status" value="1"/>
</dbReference>
<dbReference type="PIRSF" id="PIRSF000371">
    <property type="entry name" value="PFL_act_enz"/>
    <property type="match status" value="1"/>
</dbReference>
<dbReference type="SFLD" id="SFLDG01118">
    <property type="entry name" value="activating_enzymes__group_2"/>
    <property type="match status" value="1"/>
</dbReference>
<dbReference type="SFLD" id="SFLDF00278">
    <property type="entry name" value="pyruvate_formate-lyase_activas"/>
    <property type="match status" value="1"/>
</dbReference>
<dbReference type="SUPFAM" id="SSF102114">
    <property type="entry name" value="Radical SAM enzymes"/>
    <property type="match status" value="1"/>
</dbReference>
<dbReference type="PROSITE" id="PS01087">
    <property type="entry name" value="RADICAL_ACTIVATING"/>
    <property type="match status" value="1"/>
</dbReference>
<dbReference type="PROSITE" id="PS51918">
    <property type="entry name" value="RADICAL_SAM"/>
    <property type="match status" value="1"/>
</dbReference>
<protein>
    <recommendedName>
        <fullName>Pyruvate formate-lyase-activating enzyme</fullName>
        <shortName>PFL-activating enzyme</shortName>
        <ecNumber>1.97.1.4</ecNumber>
    </recommendedName>
</protein>
<evidence type="ECO:0000250" key="1"/>
<evidence type="ECO:0000250" key="2">
    <source>
        <dbReference type="UniProtKB" id="P0A9N4"/>
    </source>
</evidence>
<evidence type="ECO:0000255" key="3">
    <source>
        <dbReference type="PROSITE-ProRule" id="PRU01266"/>
    </source>
</evidence>
<evidence type="ECO:0000305" key="4"/>